<protein>
    <recommendedName>
        <fullName evidence="9">Protein FRG1</fullName>
    </recommendedName>
    <alternativeName>
        <fullName>FSHD region gene 1 protein</fullName>
    </alternativeName>
</protein>
<sequence>MAEYSYVKSTKLVLKGTKTKSKKKKSKDKKRKREEDEETQLDIVGIWWTVTNFGEISGTIAIEMDKGTYIHALDNGLFTLGAPHKEVDEGPSPPEQFTAVKLSDSRIALKSGYGKYLGINSDGLVVGRSDAIGPREQWEPVFQNGKMALLASNSCFIRCNEAGDIEAKSKTAGEEEMIKIRSCAERETKKKDDIPEEDKGNVKQCEINYVKKFQSFQDHKLKISKEDSKILKKARKDGFLHETLLDRRAKLKADRYCK</sequence>
<keyword id="KW-0002">3D-structure</keyword>
<keyword id="KW-0009">Actin-binding</keyword>
<keyword id="KW-0963">Cytoplasm</keyword>
<keyword id="KW-0507">mRNA processing</keyword>
<keyword id="KW-0508">mRNA splicing</keyword>
<keyword id="KW-0517">Myogenesis</keyword>
<keyword id="KW-0539">Nucleus</keyword>
<keyword id="KW-1267">Proteomics identification</keyword>
<keyword id="KW-1185">Reference proteome</keyword>
<keyword id="KW-0690">Ribosome biogenesis</keyword>
<keyword id="KW-0694">RNA-binding</keyword>
<keyword id="KW-0698">rRNA processing</keyword>
<keyword id="KW-0747">Spliceosome</keyword>
<comment type="function">
    <text evidence="2 3 6 7 8">Binds to mRNA in a sequence-independent manner. May play a role in regulation of pre-mRNA splicing or in the assembly of rRNA into ribosomal subunits. May be involved in mRNA transport. May be involved in epigenetic regulation of muscle differentiation through regulation of activity of the histone-lysine N-methyltransferase KMT5B.</text>
</comment>
<comment type="subunit">
    <text evidence="2 5 7 8">Homodimer and homotetramer in solution. Identified in the spliceosome C complex. Interacts with KMT5B (via C-terminus). Interacts (via N-terminus) with KPNA2 and NXF1/TAP. Interacts with F-actin with a stoichiometry of 2:1. Interacts with GARIN3, SMN1 and PABPN1 (PubMed:17103222).</text>
</comment>
<comment type="interaction">
    <interactant intactId="EBI-2515248">
        <id>Q14331</id>
    </interactant>
    <interactant intactId="EBI-373289">
        <id>Q9HCG8</id>
        <label>CWC22</label>
    </interactant>
    <organismsDiffer>false</organismsDiffer>
    <experiments>2</experiments>
</comment>
<comment type="interaction">
    <interactant intactId="EBI-2515248">
        <id>Q14331</id>
    </interactant>
    <interactant intactId="EBI-371922">
        <id>Q96B26</id>
        <label>EXOSC8</label>
    </interactant>
    <organismsDiffer>false</organismsDiffer>
    <experiments>3</experiments>
</comment>
<comment type="interaction">
    <interactant intactId="EBI-2515248">
        <id>Q14331</id>
    </interactant>
    <interactant intactId="EBI-744239">
        <id>Q14749</id>
        <label>GNMT</label>
    </interactant>
    <organismsDiffer>false</organismsDiffer>
    <experiments>3</experiments>
</comment>
<comment type="interaction">
    <interactant intactId="EBI-2515248">
        <id>Q14331</id>
    </interactant>
    <interactant intactId="EBI-10171697">
        <id>Q6A162</id>
        <label>KRT40</label>
    </interactant>
    <organismsDiffer>false</organismsDiffer>
    <experiments>3</experiments>
</comment>
<comment type="interaction">
    <interactant intactId="EBI-2515248">
        <id>Q14331</id>
    </interactant>
    <interactant intactId="EBI-741037">
        <id>Q9BRK4</id>
        <label>LZTS2</label>
    </interactant>
    <organismsDiffer>false</organismsDiffer>
    <experiments>3</experiments>
</comment>
<comment type="subcellular location">
    <subcellularLocation>
        <location evidence="3 5 7">Nucleus</location>
        <location evidence="3 5 7">Cajal body</location>
    </subcellularLocation>
    <subcellularLocation>
        <location evidence="3 6 7">Nucleus</location>
        <location evidence="3 6 7">Nucleolus</location>
    </subcellularLocation>
    <subcellularLocation>
        <location evidence="6 7">Cytoplasm</location>
    </subcellularLocation>
    <subcellularLocation>
        <location evidence="6">Cytoplasm</location>
        <location evidence="6">Myofibril</location>
        <location evidence="6">Sarcomere</location>
        <location evidence="6">Z line</location>
    </subcellularLocation>
    <text evidence="6">Localization changes during myogenesis from mainly cytoplasmic in undifferentiated myoblasts, to strongly nucleolar in early myotubes and back to cytoplasmic 5 days post-differentiation (PubMed:20970242). Localized at the Z-line in the sarcomere of matured myotubes 8 days post-differentiation (PubMed:20970242).</text>
</comment>
<comment type="tissue specificity">
    <text evidence="6">Expressed in adult muscle, lymphocytes, fetal brain, muscle, and placenta. Also expressed in the smooth muscle of arteries and veins, the sweat glands and the epidermis.</text>
</comment>
<comment type="disease" evidence="4 8">
    <disease id="DI-01545">
        <name>Facioscapulohumeral muscular dystrophy 1</name>
        <acronym>FSHD1</acronym>
        <description>A degenerative muscle disease characterized by slowly progressive weakness of the muscles of the face, upper-arm, and shoulder girdle. The onset of symptoms usually occurs in the first or second decade of life. Affected individuals usually present with impairment of upper extremity elevation. This tends to be followed by facial weakness, primarily involving the orbicularis oris and orbicularis oculi muscles.</description>
        <dbReference type="MIM" id="158900"/>
    </disease>
    <text evidence="4 8">The gene represented in this entry may be involved in disease pathogenesis. Overexpression of human FRG1 in mice leads to development of facioscapulohumeral muscular dystrophy (FSHD1)-like symptoms such as kyphosis, progressive muscle dystrophy and skeletal muscle atrophy (PubMed:16341202). It also causes aberrant pre-mRNA splicing of TNNT3 and MTMR1, affects the localization and activity of KMT5B, and leads to increased levels of EID3, resulting in inhibited muscle differentiation (PubMed:23720823). These results suggest that FSHD1 results from inappropriate overexpression of FRG1 which leads to abnormal alternative splicing of specific pre-mRNAs.</text>
</comment>
<comment type="similarity">
    <text evidence="9">Belongs to the FRG1 family.</text>
</comment>
<comment type="caution">
    <text evidence="10 11">Was originally thought to be located in nuclear speckles based on overexpression of the protein (PubMed:15060122). However, the endogenous protein was later shown not be expressed in nuclear speckles (PubMed:21699900).</text>
</comment>
<proteinExistence type="evidence at protein level"/>
<feature type="chain" id="PRO_0000220767" description="Protein FRG1">
    <location>
        <begin position="1"/>
        <end position="258"/>
    </location>
</feature>
<feature type="short sequence motif" description="Nuclear localization signal" evidence="1">
    <location>
        <begin position="22"/>
        <end position="32"/>
    </location>
</feature>
<feature type="short sequence motif" description="Bipartite nuclear localization signal" evidence="1">
    <location>
        <begin position="235"/>
        <end position="251"/>
    </location>
</feature>
<feature type="sequence variant" id="VAR_049105" description="In dbSNP:rs17797703.">
    <original>T</original>
    <variation>A</variation>
    <location>
        <position position="19"/>
    </location>
</feature>
<feature type="helix" evidence="13">
    <location>
        <begin position="232"/>
        <end position="237"/>
    </location>
</feature>
<feature type="helix" evidence="13">
    <location>
        <begin position="240"/>
        <end position="248"/>
    </location>
</feature>
<feature type="turn" evidence="13">
    <location>
        <begin position="255"/>
        <end position="257"/>
    </location>
</feature>
<dbReference type="EMBL" id="L76159">
    <property type="protein sequence ID" value="AAA95939.1"/>
    <property type="molecule type" value="mRNA"/>
</dbReference>
<dbReference type="EMBL" id="AF146191">
    <property type="protein sequence ID" value="AAD46768.1"/>
    <property type="molecule type" value="Genomic_DNA"/>
</dbReference>
<dbReference type="EMBL" id="AK291890">
    <property type="protein sequence ID" value="BAF84579.1"/>
    <property type="molecule type" value="mRNA"/>
</dbReference>
<dbReference type="EMBL" id="CH471056">
    <property type="protein sequence ID" value="EAX04600.1"/>
    <property type="molecule type" value="Genomic_DNA"/>
</dbReference>
<dbReference type="EMBL" id="BC053997">
    <property type="protein sequence ID" value="AAH53997.1"/>
    <property type="molecule type" value="mRNA"/>
</dbReference>
<dbReference type="CCDS" id="CCDS34121.1"/>
<dbReference type="RefSeq" id="NP_004468.1">
    <property type="nucleotide sequence ID" value="NM_004477.3"/>
</dbReference>
<dbReference type="PDB" id="6ZYM">
    <property type="method" value="EM"/>
    <property type="resolution" value="3.40 A"/>
    <property type="chains" value="x=1-258"/>
</dbReference>
<dbReference type="PDB" id="7A5P">
    <property type="method" value="EM"/>
    <property type="resolution" value="5.00 A"/>
    <property type="chains" value="x=1-258"/>
</dbReference>
<dbReference type="PDB" id="8I0W">
    <property type="method" value="EM"/>
    <property type="resolution" value="3.40 A"/>
    <property type="chains" value="2=1-258"/>
</dbReference>
<dbReference type="PDBsum" id="6ZYM"/>
<dbReference type="PDBsum" id="7A5P"/>
<dbReference type="PDBsum" id="8I0W"/>
<dbReference type="EMDB" id="EMD-11569"/>
<dbReference type="EMDB" id="EMD-35113"/>
<dbReference type="SMR" id="Q14331"/>
<dbReference type="BioGRID" id="108764">
    <property type="interactions" value="63"/>
</dbReference>
<dbReference type="CORUM" id="Q14331"/>
<dbReference type="FunCoup" id="Q14331">
    <property type="interactions" value="2034"/>
</dbReference>
<dbReference type="IntAct" id="Q14331">
    <property type="interactions" value="29"/>
</dbReference>
<dbReference type="MINT" id="Q14331"/>
<dbReference type="STRING" id="9606.ENSP00000226798"/>
<dbReference type="GlyGen" id="Q14331">
    <property type="glycosylation" value="1 site, 1 O-linked glycan (1 site)"/>
</dbReference>
<dbReference type="iPTMnet" id="Q14331"/>
<dbReference type="PhosphoSitePlus" id="Q14331"/>
<dbReference type="SwissPalm" id="Q14331"/>
<dbReference type="BioMuta" id="FRG1"/>
<dbReference type="DMDM" id="18202499"/>
<dbReference type="jPOST" id="Q14331"/>
<dbReference type="MassIVE" id="Q14331"/>
<dbReference type="PaxDb" id="9606-ENSP00000226798"/>
<dbReference type="PeptideAtlas" id="Q14331"/>
<dbReference type="ProteomicsDB" id="59967"/>
<dbReference type="Pumba" id="Q14331"/>
<dbReference type="Antibodypedia" id="29157">
    <property type="antibodies" value="216 antibodies from 25 providers"/>
</dbReference>
<dbReference type="DNASU" id="2483"/>
<dbReference type="Ensembl" id="ENST00000226798.9">
    <property type="protein sequence ID" value="ENSP00000226798.4"/>
    <property type="gene ID" value="ENSG00000109536.13"/>
</dbReference>
<dbReference type="Ensembl" id="ENST00000620886.3">
    <property type="protein sequence ID" value="ENSP00000483471.1"/>
    <property type="gene ID" value="ENSG00000275145.3"/>
</dbReference>
<dbReference type="Ensembl" id="ENST00000636590.2">
    <property type="protein sequence ID" value="ENSP00000490541.1"/>
    <property type="gene ID" value="ENSG00000283153.2"/>
</dbReference>
<dbReference type="Ensembl" id="ENST00000637998.2">
    <property type="protein sequence ID" value="ENSP00000489690.1"/>
    <property type="gene ID" value="ENSG00000283630.3"/>
</dbReference>
<dbReference type="GeneID" id="2483"/>
<dbReference type="KEGG" id="hsa:2483"/>
<dbReference type="MANE-Select" id="ENST00000226798.9">
    <property type="protein sequence ID" value="ENSP00000226798.4"/>
    <property type="RefSeq nucleotide sequence ID" value="NM_004477.3"/>
    <property type="RefSeq protein sequence ID" value="NP_004468.1"/>
</dbReference>
<dbReference type="UCSC" id="uc003izs.4">
    <property type="organism name" value="human"/>
</dbReference>
<dbReference type="AGR" id="HGNC:3954"/>
<dbReference type="CTD" id="2483"/>
<dbReference type="DisGeNET" id="2483"/>
<dbReference type="GeneCards" id="FRG1"/>
<dbReference type="GeneReviews" id="FRG1"/>
<dbReference type="HGNC" id="HGNC:3954">
    <property type="gene designation" value="FRG1"/>
</dbReference>
<dbReference type="HPA" id="ENSG00000109536">
    <property type="expression patterns" value="Low tissue specificity"/>
</dbReference>
<dbReference type="MalaCards" id="FRG1"/>
<dbReference type="MIM" id="158900">
    <property type="type" value="phenotype"/>
</dbReference>
<dbReference type="MIM" id="601278">
    <property type="type" value="gene"/>
</dbReference>
<dbReference type="neXtProt" id="NX_Q14331"/>
<dbReference type="OpenTargets" id="ENSG00000109536"/>
<dbReference type="Orphanet" id="269">
    <property type="disease" value="Facioscapulohumeral dystrophy"/>
</dbReference>
<dbReference type="PharmGKB" id="PA28372"/>
<dbReference type="VEuPathDB" id="HostDB:ENSG00000109536"/>
<dbReference type="eggNOG" id="KOG3962">
    <property type="taxonomic scope" value="Eukaryota"/>
</dbReference>
<dbReference type="GeneTree" id="ENSGT00390000004552"/>
<dbReference type="HOGENOM" id="CLU_094616_0_0_1"/>
<dbReference type="InParanoid" id="Q14331"/>
<dbReference type="OMA" id="IEQWEPI"/>
<dbReference type="OrthoDB" id="5539371at2759"/>
<dbReference type="PAN-GO" id="Q14331">
    <property type="GO annotations" value="4 GO annotations based on evolutionary models"/>
</dbReference>
<dbReference type="PhylomeDB" id="Q14331"/>
<dbReference type="TreeFam" id="TF314108"/>
<dbReference type="PathwayCommons" id="Q14331"/>
<dbReference type="SignaLink" id="Q14331"/>
<dbReference type="SIGNOR" id="Q14331"/>
<dbReference type="BioGRID-ORCS" id="2483">
    <property type="hits" value="67 hits in 1087 CRISPR screens"/>
</dbReference>
<dbReference type="CD-CODE" id="6F24707C">
    <property type="entry name" value="Cajal body"/>
</dbReference>
<dbReference type="CD-CODE" id="91857CE7">
    <property type="entry name" value="Nucleolus"/>
</dbReference>
<dbReference type="ChiTaRS" id="FRG1">
    <property type="organism name" value="human"/>
</dbReference>
<dbReference type="GeneWiki" id="FRG1"/>
<dbReference type="GenomeRNAi" id="2483"/>
<dbReference type="Pharos" id="Q14331">
    <property type="development level" value="Tbio"/>
</dbReference>
<dbReference type="PRO" id="PR:Q14331"/>
<dbReference type="Proteomes" id="UP000005640">
    <property type="component" value="Chromosome 4"/>
</dbReference>
<dbReference type="RNAct" id="Q14331">
    <property type="molecule type" value="protein"/>
</dbReference>
<dbReference type="Bgee" id="ENSG00000109536">
    <property type="expression patterns" value="Expressed in calcaneal tendon and 101 other cell types or tissues"/>
</dbReference>
<dbReference type="ExpressionAtlas" id="Q14331">
    <property type="expression patterns" value="baseline and differential"/>
</dbReference>
<dbReference type="GO" id="GO:0015030">
    <property type="term" value="C:Cajal body"/>
    <property type="evidence" value="ECO:0007669"/>
    <property type="project" value="UniProtKB-SubCell"/>
</dbReference>
<dbReference type="GO" id="GO:0071013">
    <property type="term" value="C:catalytic step 2 spliceosome"/>
    <property type="evidence" value="ECO:0000314"/>
    <property type="project" value="UniProtKB"/>
</dbReference>
<dbReference type="GO" id="GO:0005730">
    <property type="term" value="C:nucleolus"/>
    <property type="evidence" value="ECO:0000318"/>
    <property type="project" value="GO_Central"/>
</dbReference>
<dbReference type="GO" id="GO:0055120">
    <property type="term" value="C:striated muscle dense body"/>
    <property type="evidence" value="ECO:0000318"/>
    <property type="project" value="GO_Central"/>
</dbReference>
<dbReference type="GO" id="GO:0030018">
    <property type="term" value="C:Z disc"/>
    <property type="evidence" value="ECO:0007669"/>
    <property type="project" value="UniProtKB-SubCell"/>
</dbReference>
<dbReference type="GO" id="GO:0051015">
    <property type="term" value="F:actin filament binding"/>
    <property type="evidence" value="ECO:0000318"/>
    <property type="project" value="GO_Central"/>
</dbReference>
<dbReference type="GO" id="GO:0003723">
    <property type="term" value="F:RNA binding"/>
    <property type="evidence" value="ECO:0007005"/>
    <property type="project" value="UniProtKB"/>
</dbReference>
<dbReference type="GO" id="GO:0000398">
    <property type="term" value="P:mRNA splicing, via spliceosome"/>
    <property type="evidence" value="ECO:0000305"/>
    <property type="project" value="UniProtKB"/>
</dbReference>
<dbReference type="GO" id="GO:0007517">
    <property type="term" value="P:muscle organ development"/>
    <property type="evidence" value="ECO:0007669"/>
    <property type="project" value="UniProtKB-KW"/>
</dbReference>
<dbReference type="GO" id="GO:0006364">
    <property type="term" value="P:rRNA processing"/>
    <property type="evidence" value="ECO:0007669"/>
    <property type="project" value="UniProtKB-KW"/>
</dbReference>
<dbReference type="CDD" id="cd23338">
    <property type="entry name" value="beta-trefoil_FSCN_FRG1"/>
    <property type="match status" value="1"/>
</dbReference>
<dbReference type="FunFam" id="2.80.10.50:FF:000031">
    <property type="entry name" value="FRG1 isoform 1"/>
    <property type="match status" value="1"/>
</dbReference>
<dbReference type="Gene3D" id="2.80.10.50">
    <property type="match status" value="1"/>
</dbReference>
<dbReference type="InterPro" id="IPR008999">
    <property type="entry name" value="Actin-crosslinking"/>
</dbReference>
<dbReference type="InterPro" id="IPR010414">
    <property type="entry name" value="FRG1"/>
</dbReference>
<dbReference type="PANTHER" id="PTHR12928">
    <property type="entry name" value="FRG1 PROTEIN"/>
    <property type="match status" value="1"/>
</dbReference>
<dbReference type="PANTHER" id="PTHR12928:SF3">
    <property type="entry name" value="PROTEIN FRG1"/>
    <property type="match status" value="1"/>
</dbReference>
<dbReference type="Pfam" id="PF06229">
    <property type="entry name" value="FRG1"/>
    <property type="match status" value="1"/>
</dbReference>
<dbReference type="SUPFAM" id="SSF50405">
    <property type="entry name" value="Actin-crosslinking proteins"/>
    <property type="match status" value="1"/>
</dbReference>
<gene>
    <name evidence="12" type="primary">FRG1</name>
</gene>
<evidence type="ECO:0000255" key="1"/>
<evidence type="ECO:0000269" key="2">
    <source>
    </source>
</evidence>
<evidence type="ECO:0000269" key="3">
    <source>
    </source>
</evidence>
<evidence type="ECO:0000269" key="4">
    <source>
    </source>
</evidence>
<evidence type="ECO:0000269" key="5">
    <source>
    </source>
</evidence>
<evidence type="ECO:0000269" key="6">
    <source>
    </source>
</evidence>
<evidence type="ECO:0000269" key="7">
    <source>
    </source>
</evidence>
<evidence type="ECO:0000269" key="8">
    <source>
    </source>
</evidence>
<evidence type="ECO:0000305" key="9"/>
<evidence type="ECO:0000305" key="10">
    <source>
    </source>
</evidence>
<evidence type="ECO:0000305" key="11">
    <source>
    </source>
</evidence>
<evidence type="ECO:0000312" key="12">
    <source>
        <dbReference type="HGNC" id="HGNC:3954"/>
    </source>
</evidence>
<evidence type="ECO:0007829" key="13">
    <source>
        <dbReference type="PDB" id="6ZYM"/>
    </source>
</evidence>
<reference key="1">
    <citation type="journal article" date="1996" name="Hum. Mol. Genet.">
        <title>Identification of the first gene (FRG1) from the FSHD region on human chromosome 4q35.</title>
        <authorList>
            <person name="van Deutekom J.C.T."/>
            <person name="Lemmers R.J.L.F."/>
            <person name="Grewal P.K."/>
            <person name="van Geel M."/>
            <person name="Romberg S."/>
            <person name="Dauwerse H.G."/>
            <person name="Wright T.J."/>
            <person name="Padberg G.W."/>
            <person name="Hofker M.H."/>
            <person name="Hewitt J.E."/>
            <person name="Frants R.R."/>
        </authorList>
    </citation>
    <scope>NUCLEOTIDE SEQUENCE [MRNA]</scope>
</reference>
<reference key="2">
    <citation type="journal article" date="1999" name="Genomics">
        <title>The FSHD region on human chromosome 4q35 contains potential coding regions among pseudogenes and a high density of repeat elements.</title>
        <authorList>
            <person name="van Geel M."/>
            <person name="Heather L.J."/>
            <person name="Lyle R."/>
            <person name="Hewitt J.E."/>
            <person name="Frants R.R."/>
            <person name="de Jong P.J."/>
        </authorList>
    </citation>
    <scope>NUCLEOTIDE SEQUENCE [GENOMIC DNA]</scope>
</reference>
<reference key="3">
    <citation type="journal article" date="2004" name="Nat. Genet.">
        <title>Complete sequencing and characterization of 21,243 full-length human cDNAs.</title>
        <authorList>
            <person name="Ota T."/>
            <person name="Suzuki Y."/>
            <person name="Nishikawa T."/>
            <person name="Otsuki T."/>
            <person name="Sugiyama T."/>
            <person name="Irie R."/>
            <person name="Wakamatsu A."/>
            <person name="Hayashi K."/>
            <person name="Sato H."/>
            <person name="Nagai K."/>
            <person name="Kimura K."/>
            <person name="Makita H."/>
            <person name="Sekine M."/>
            <person name="Obayashi M."/>
            <person name="Nishi T."/>
            <person name="Shibahara T."/>
            <person name="Tanaka T."/>
            <person name="Ishii S."/>
            <person name="Yamamoto J."/>
            <person name="Saito K."/>
            <person name="Kawai Y."/>
            <person name="Isono Y."/>
            <person name="Nakamura Y."/>
            <person name="Nagahari K."/>
            <person name="Murakami K."/>
            <person name="Yasuda T."/>
            <person name="Iwayanagi T."/>
            <person name="Wagatsuma M."/>
            <person name="Shiratori A."/>
            <person name="Sudo H."/>
            <person name="Hosoiri T."/>
            <person name="Kaku Y."/>
            <person name="Kodaira H."/>
            <person name="Kondo H."/>
            <person name="Sugawara M."/>
            <person name="Takahashi M."/>
            <person name="Kanda K."/>
            <person name="Yokoi T."/>
            <person name="Furuya T."/>
            <person name="Kikkawa E."/>
            <person name="Omura Y."/>
            <person name="Abe K."/>
            <person name="Kamihara K."/>
            <person name="Katsuta N."/>
            <person name="Sato K."/>
            <person name="Tanikawa M."/>
            <person name="Yamazaki M."/>
            <person name="Ninomiya K."/>
            <person name="Ishibashi T."/>
            <person name="Yamashita H."/>
            <person name="Murakawa K."/>
            <person name="Fujimori K."/>
            <person name="Tanai H."/>
            <person name="Kimata M."/>
            <person name="Watanabe M."/>
            <person name="Hiraoka S."/>
            <person name="Chiba Y."/>
            <person name="Ishida S."/>
            <person name="Ono Y."/>
            <person name="Takiguchi S."/>
            <person name="Watanabe S."/>
            <person name="Yosida M."/>
            <person name="Hotuta T."/>
            <person name="Kusano J."/>
            <person name="Kanehori K."/>
            <person name="Takahashi-Fujii A."/>
            <person name="Hara H."/>
            <person name="Tanase T.-O."/>
            <person name="Nomura Y."/>
            <person name="Togiya S."/>
            <person name="Komai F."/>
            <person name="Hara R."/>
            <person name="Takeuchi K."/>
            <person name="Arita M."/>
            <person name="Imose N."/>
            <person name="Musashino K."/>
            <person name="Yuuki H."/>
            <person name="Oshima A."/>
            <person name="Sasaki N."/>
            <person name="Aotsuka S."/>
            <person name="Yoshikawa Y."/>
            <person name="Matsunawa H."/>
            <person name="Ichihara T."/>
            <person name="Shiohata N."/>
            <person name="Sano S."/>
            <person name="Moriya S."/>
            <person name="Momiyama H."/>
            <person name="Satoh N."/>
            <person name="Takami S."/>
            <person name="Terashima Y."/>
            <person name="Suzuki O."/>
            <person name="Nakagawa S."/>
            <person name="Senoh A."/>
            <person name="Mizoguchi H."/>
            <person name="Goto Y."/>
            <person name="Shimizu F."/>
            <person name="Wakebe H."/>
            <person name="Hishigaki H."/>
            <person name="Watanabe T."/>
            <person name="Sugiyama A."/>
            <person name="Takemoto M."/>
            <person name="Kawakami B."/>
            <person name="Yamazaki M."/>
            <person name="Watanabe K."/>
            <person name="Kumagai A."/>
            <person name="Itakura S."/>
            <person name="Fukuzumi Y."/>
            <person name="Fujimori Y."/>
            <person name="Komiyama M."/>
            <person name="Tashiro H."/>
            <person name="Tanigami A."/>
            <person name="Fujiwara T."/>
            <person name="Ono T."/>
            <person name="Yamada K."/>
            <person name="Fujii Y."/>
            <person name="Ozaki K."/>
            <person name="Hirao M."/>
            <person name="Ohmori Y."/>
            <person name="Kawabata A."/>
            <person name="Hikiji T."/>
            <person name="Kobatake N."/>
            <person name="Inagaki H."/>
            <person name="Ikema Y."/>
            <person name="Okamoto S."/>
            <person name="Okitani R."/>
            <person name="Kawakami T."/>
            <person name="Noguchi S."/>
            <person name="Itoh T."/>
            <person name="Shigeta K."/>
            <person name="Senba T."/>
            <person name="Matsumura K."/>
            <person name="Nakajima Y."/>
            <person name="Mizuno T."/>
            <person name="Morinaga M."/>
            <person name="Sasaki M."/>
            <person name="Togashi T."/>
            <person name="Oyama M."/>
            <person name="Hata H."/>
            <person name="Watanabe M."/>
            <person name="Komatsu T."/>
            <person name="Mizushima-Sugano J."/>
            <person name="Satoh T."/>
            <person name="Shirai Y."/>
            <person name="Takahashi Y."/>
            <person name="Nakagawa K."/>
            <person name="Okumura K."/>
            <person name="Nagase T."/>
            <person name="Nomura N."/>
            <person name="Kikuchi H."/>
            <person name="Masuho Y."/>
            <person name="Yamashita R."/>
            <person name="Nakai K."/>
            <person name="Yada T."/>
            <person name="Nakamura Y."/>
            <person name="Ohara O."/>
            <person name="Isogai T."/>
            <person name="Sugano S."/>
        </authorList>
    </citation>
    <scope>NUCLEOTIDE SEQUENCE [LARGE SCALE MRNA]</scope>
    <source>
        <tissue>Skeletal muscle</tissue>
    </source>
</reference>
<reference key="4">
    <citation type="submission" date="2005-09" db="EMBL/GenBank/DDBJ databases">
        <authorList>
            <person name="Mural R.J."/>
            <person name="Istrail S."/>
            <person name="Sutton G.G."/>
            <person name="Florea L."/>
            <person name="Halpern A.L."/>
            <person name="Mobarry C.M."/>
            <person name="Lippert R."/>
            <person name="Walenz B."/>
            <person name="Shatkay H."/>
            <person name="Dew I."/>
            <person name="Miller J.R."/>
            <person name="Flanigan M.J."/>
            <person name="Edwards N.J."/>
            <person name="Bolanos R."/>
            <person name="Fasulo D."/>
            <person name="Halldorsson B.V."/>
            <person name="Hannenhalli S."/>
            <person name="Turner R."/>
            <person name="Yooseph S."/>
            <person name="Lu F."/>
            <person name="Nusskern D.R."/>
            <person name="Shue B.C."/>
            <person name="Zheng X.H."/>
            <person name="Zhong F."/>
            <person name="Delcher A.L."/>
            <person name="Huson D.H."/>
            <person name="Kravitz S.A."/>
            <person name="Mouchard L."/>
            <person name="Reinert K."/>
            <person name="Remington K.A."/>
            <person name="Clark A.G."/>
            <person name="Waterman M.S."/>
            <person name="Eichler E.E."/>
            <person name="Adams M.D."/>
            <person name="Hunkapiller M.W."/>
            <person name="Myers E.W."/>
            <person name="Venter J.C."/>
        </authorList>
    </citation>
    <scope>NUCLEOTIDE SEQUENCE [LARGE SCALE GENOMIC DNA]</scope>
</reference>
<reference key="5">
    <citation type="journal article" date="2004" name="Genome Res.">
        <title>The status, quality, and expansion of the NIH full-length cDNA project: the Mammalian Gene Collection (MGC).</title>
        <authorList>
            <consortium name="The MGC Project Team"/>
        </authorList>
    </citation>
    <scope>NUCLEOTIDE SEQUENCE [LARGE SCALE MRNA]</scope>
    <source>
        <tissue>Uterus</tissue>
    </source>
</reference>
<reference key="6">
    <citation type="journal article" date="2002" name="RNA">
        <title>Purification and characterization of native spliceosomes suitable for three-dimensional structural analysis.</title>
        <authorList>
            <person name="Jurica M.S."/>
            <person name="Licklider L.J."/>
            <person name="Gygi S.P."/>
            <person name="Grigorieff N."/>
            <person name="Moore M.J."/>
        </authorList>
    </citation>
    <scope>FUNCTION</scope>
    <scope>IDENTIFICATION BY MASS SPECTROMETRY</scope>
    <scope>IDENTIFICATION IN THE SPLICEOSOMAL C COMPLEX</scope>
</reference>
<reference key="7">
    <citation type="journal article" date="2004" name="J. Med. Genet.">
        <title>FRG1P is localised in the nucleolus, Cajal bodies, and speckles.</title>
        <authorList>
            <person name="van Koningsbruggen S."/>
            <person name="Dirks R.W."/>
            <person name="Mommaas A.M."/>
            <person name="Onderwater J.J."/>
            <person name="Deidda G."/>
            <person name="Padberg G.W."/>
            <person name="Frants R.R."/>
            <person name="van der Maarel S.M."/>
        </authorList>
    </citation>
    <scope>FUNCTION</scope>
    <scope>SUBCELLULAR LOCATION</scope>
</reference>
<reference key="8">
    <citation type="journal article" date="2006" name="Nature">
        <title>Facioscapulohumeral muscular dystrophy in mice overexpressing FRG1.</title>
        <authorList>
            <person name="Gabellini D."/>
            <person name="D'Antona G."/>
            <person name="Moggio M."/>
            <person name="Prelle A."/>
            <person name="Zecca C."/>
            <person name="Adami R."/>
            <person name="Angeletti B."/>
            <person name="Ciscato P."/>
            <person name="Pellegrino M.A."/>
            <person name="Bottinelli R."/>
            <person name="Green M.R."/>
            <person name="Tupler R."/>
        </authorList>
    </citation>
    <scope>OVEREXPRESSION</scope>
    <scope>INVOLVEMENT IN FSHD1</scope>
</reference>
<reference key="9">
    <citation type="journal article" date="2007" name="Chromosoma">
        <title>FRG1P-mediated aggregation of proteins involved in pre-mRNA processing.</title>
        <authorList>
            <person name="van Koningsbruggen S."/>
            <person name="Straasheijm K.R."/>
            <person name="Sterrenburg E."/>
            <person name="de Graaf N."/>
            <person name="Dauwerse H.G."/>
            <person name="Frants R.R."/>
            <person name="van der Maarel S.M."/>
        </authorList>
    </citation>
    <scope>FUNCTION</scope>
    <scope>SUBCELLULAR LOCATION</scope>
    <scope>INTERACTION WITH GARIN3; SMN1 AND PABPN1</scope>
</reference>
<reference key="10">
    <citation type="journal article" date="2011" name="BMC Syst. Biol.">
        <title>Initial characterization of the human central proteome.</title>
        <authorList>
            <person name="Burkard T.R."/>
            <person name="Planyavsky M."/>
            <person name="Kaupe I."/>
            <person name="Breitwieser F.P."/>
            <person name="Buerckstuemmer T."/>
            <person name="Bennett K.L."/>
            <person name="Superti-Furga G."/>
            <person name="Colinge J."/>
        </authorList>
    </citation>
    <scope>IDENTIFICATION BY MASS SPECTROMETRY [LARGE SCALE ANALYSIS]</scope>
</reference>
<reference key="11">
    <citation type="journal article" date="2011" name="Differentiation">
        <title>Facioscapulohumeral muscular dystrophy (FSHD) region gene 1 (FRG1) is a dynamic nuclear and sarcomeric protein.</title>
        <authorList>
            <person name="Hanel M.L."/>
            <person name="Sun C.Y."/>
            <person name="Jones T.I."/>
            <person name="Long S.W."/>
            <person name="Zanotti S."/>
            <person name="Milner D."/>
            <person name="Jones P.L."/>
        </authorList>
    </citation>
    <scope>FUNCTION</scope>
    <scope>SUBCELLULAR LOCATION</scope>
    <scope>TISSUE SPECIFICITY</scope>
</reference>
<reference key="12">
    <citation type="journal article" date="2011" name="J. Mol. Biol.">
        <title>Facioscapulohumeral muscular dystrophy region gene 1 is a dynamic RNA-associated and actin-bundling protein.</title>
        <authorList>
            <person name="Sun C.Y."/>
            <person name="van Koningsbruggen S."/>
            <person name="Long S.W."/>
            <person name="Straasheijm K."/>
            <person name="Klooster R."/>
            <person name="Jones T.I."/>
            <person name="Bellini M."/>
            <person name="Levesque L."/>
            <person name="Brieher W.M."/>
            <person name="van der Maarel S.M."/>
            <person name="Jones P.L."/>
        </authorList>
    </citation>
    <scope>FUNCTION</scope>
    <scope>HOMODIMERIZATION</scope>
    <scope>HOMOTETRAMERIZATION</scope>
    <scope>INTERACTION WITH KPNA2 AND NXF1</scope>
    <scope>RNA-BINDING</scope>
    <scope>ACTIN-BINDING</scope>
    <scope>SUBCELLULAR LOCATION</scope>
    <scope>NUCLEAR LOCALIZATION SIGNAL</scope>
</reference>
<reference key="13">
    <citation type="journal article" date="2013" name="J. Mol. Cell Biol.">
        <title>FSHD muscular dystrophy region gene 1 binds Suv4-20h1 histone methyltransferase and impairs myogenesis.</title>
        <authorList>
            <person name="Neguembor M.V."/>
            <person name="Xynos A."/>
            <person name="Onorati M.C."/>
            <person name="Caccia R."/>
            <person name="Bortolanza S."/>
            <person name="Godio C."/>
            <person name="Pistoni M."/>
            <person name="Corona D.F."/>
            <person name="Schotta G."/>
            <person name="Gabellini D."/>
        </authorList>
    </citation>
    <scope>FUNCTION</scope>
    <scope>OVEREXPRESSION</scope>
    <scope>SUBCELLULAR LOCATION</scope>
    <scope>INTERACTION WITH KMT5B</scope>
    <scope>INVOLVEMENT IN FSHD1</scope>
</reference>
<organism>
    <name type="scientific">Homo sapiens</name>
    <name type="common">Human</name>
    <dbReference type="NCBI Taxonomy" id="9606"/>
    <lineage>
        <taxon>Eukaryota</taxon>
        <taxon>Metazoa</taxon>
        <taxon>Chordata</taxon>
        <taxon>Craniata</taxon>
        <taxon>Vertebrata</taxon>
        <taxon>Euteleostomi</taxon>
        <taxon>Mammalia</taxon>
        <taxon>Eutheria</taxon>
        <taxon>Euarchontoglires</taxon>
        <taxon>Primates</taxon>
        <taxon>Haplorrhini</taxon>
        <taxon>Catarrhini</taxon>
        <taxon>Hominidae</taxon>
        <taxon>Homo</taxon>
    </lineage>
</organism>
<name>FRG1_HUMAN</name>
<accession>Q14331</accession>
<accession>A8K775</accession>